<dbReference type="EC" id="3.1.3.77" evidence="1"/>
<dbReference type="EMBL" id="BX569694">
    <property type="protein sequence ID" value="CAE08479.1"/>
    <property type="molecule type" value="Genomic_DNA"/>
</dbReference>
<dbReference type="RefSeq" id="WP_011128822.1">
    <property type="nucleotide sequence ID" value="NC_005070.1"/>
</dbReference>
<dbReference type="SMR" id="Q7U4U9"/>
<dbReference type="STRING" id="84588.SYNW1964"/>
<dbReference type="KEGG" id="syw:SYNW1964"/>
<dbReference type="eggNOG" id="COG4229">
    <property type="taxonomic scope" value="Bacteria"/>
</dbReference>
<dbReference type="HOGENOM" id="CLU_023273_0_0_3"/>
<dbReference type="UniPathway" id="UPA00904">
    <property type="reaction ID" value="UER00876"/>
</dbReference>
<dbReference type="UniPathway" id="UPA00904">
    <property type="reaction ID" value="UER00877"/>
</dbReference>
<dbReference type="Proteomes" id="UP000001422">
    <property type="component" value="Chromosome"/>
</dbReference>
<dbReference type="GO" id="GO:0043715">
    <property type="term" value="F:2,3-diketo-5-methylthiopentyl-1-phosphate enolase activity"/>
    <property type="evidence" value="ECO:0007669"/>
    <property type="project" value="UniProtKB-UniRule"/>
</dbReference>
<dbReference type="GO" id="GO:0043716">
    <property type="term" value="F:2-hydroxy-3-keto-5-methylthiopentenyl-1-phosphate phosphatase activity"/>
    <property type="evidence" value="ECO:0007669"/>
    <property type="project" value="UniProtKB-UniRule"/>
</dbReference>
<dbReference type="GO" id="GO:0043874">
    <property type="term" value="F:acireductone synthase activity"/>
    <property type="evidence" value="ECO:0007669"/>
    <property type="project" value="UniProtKB-EC"/>
</dbReference>
<dbReference type="GO" id="GO:0000287">
    <property type="term" value="F:magnesium ion binding"/>
    <property type="evidence" value="ECO:0007669"/>
    <property type="project" value="UniProtKB-UniRule"/>
</dbReference>
<dbReference type="GO" id="GO:0019509">
    <property type="term" value="P:L-methionine salvage from methylthioadenosine"/>
    <property type="evidence" value="ECO:0007669"/>
    <property type="project" value="UniProtKB-UniRule"/>
</dbReference>
<dbReference type="CDD" id="cd01629">
    <property type="entry name" value="HAD_EP"/>
    <property type="match status" value="1"/>
</dbReference>
<dbReference type="Gene3D" id="1.10.720.60">
    <property type="match status" value="1"/>
</dbReference>
<dbReference type="Gene3D" id="3.40.50.1000">
    <property type="entry name" value="HAD superfamily/HAD-like"/>
    <property type="match status" value="1"/>
</dbReference>
<dbReference type="HAMAP" id="MF_01681">
    <property type="entry name" value="Salvage_MtnC"/>
    <property type="match status" value="1"/>
</dbReference>
<dbReference type="InterPro" id="IPR023943">
    <property type="entry name" value="Enolase-ppase_E1"/>
</dbReference>
<dbReference type="InterPro" id="IPR036412">
    <property type="entry name" value="HAD-like_sf"/>
</dbReference>
<dbReference type="InterPro" id="IPR023214">
    <property type="entry name" value="HAD_sf"/>
</dbReference>
<dbReference type="NCBIfam" id="TIGR01691">
    <property type="entry name" value="enolase-ppase"/>
    <property type="match status" value="1"/>
</dbReference>
<dbReference type="PANTHER" id="PTHR20371">
    <property type="entry name" value="ENOLASE-PHOSPHATASE E1"/>
    <property type="match status" value="1"/>
</dbReference>
<dbReference type="PANTHER" id="PTHR20371:SF1">
    <property type="entry name" value="ENOLASE-PHOSPHATASE E1"/>
    <property type="match status" value="1"/>
</dbReference>
<dbReference type="Pfam" id="PF00702">
    <property type="entry name" value="Hydrolase"/>
    <property type="match status" value="1"/>
</dbReference>
<dbReference type="SFLD" id="SFLDG01129">
    <property type="entry name" value="C1.5:_HAD__Beta-PGM__Phosphata"/>
    <property type="match status" value="1"/>
</dbReference>
<dbReference type="SFLD" id="SFLDF00044">
    <property type="entry name" value="enolase-phosphatase"/>
    <property type="match status" value="1"/>
</dbReference>
<dbReference type="SUPFAM" id="SSF56784">
    <property type="entry name" value="HAD-like"/>
    <property type="match status" value="1"/>
</dbReference>
<keyword id="KW-0028">Amino-acid biosynthesis</keyword>
<keyword id="KW-0378">Hydrolase</keyword>
<keyword id="KW-0460">Magnesium</keyword>
<keyword id="KW-0479">Metal-binding</keyword>
<keyword id="KW-0486">Methionine biosynthesis</keyword>
<organism>
    <name type="scientific">Parasynechococcus marenigrum (strain WH8102)</name>
    <dbReference type="NCBI Taxonomy" id="84588"/>
    <lineage>
        <taxon>Bacteria</taxon>
        <taxon>Bacillati</taxon>
        <taxon>Cyanobacteriota</taxon>
        <taxon>Cyanophyceae</taxon>
        <taxon>Synechococcales</taxon>
        <taxon>Prochlorococcaceae</taxon>
        <taxon>Parasynechococcus</taxon>
        <taxon>Parasynechococcus marenigrum</taxon>
    </lineage>
</organism>
<name>MTNC_PARMW</name>
<sequence length="245" mass="28136">MSITHLLIDIEGTTCPVSFVSEVLFPYAKQSLSSYLNDHQEDLDLKNILQEAEREWDGDPSPDSIKLRQATRNQNLNFIDSIKVYFEYLINVDRKSTALKDLQGKIWDNGYRKGEITSHLFNETTECLKRWHRRQLSLSVYSSGSIQAQKLLYRHTNDGDLEHLFDHWFDTHTGNKKECASYRKIATKISTNPSEILFISDNGEECDAAGASGMETLFSLRDGNPDQSPRSHRVIKTLNDVDEYL</sequence>
<protein>
    <recommendedName>
        <fullName evidence="1">Enolase-phosphatase E1</fullName>
        <ecNumber evidence="1">3.1.3.77</ecNumber>
    </recommendedName>
    <alternativeName>
        <fullName evidence="1">2,3-diketo-5-methylthio-1-phosphopentane phosphatase</fullName>
    </alternativeName>
</protein>
<evidence type="ECO:0000255" key="1">
    <source>
        <dbReference type="HAMAP-Rule" id="MF_01681"/>
    </source>
</evidence>
<accession>Q7U4U9</accession>
<gene>
    <name evidence="1" type="primary">mtnC</name>
    <name type="ordered locus">SYNW1964</name>
</gene>
<proteinExistence type="inferred from homology"/>
<reference key="1">
    <citation type="journal article" date="2003" name="Nature">
        <title>The genome of a motile marine Synechococcus.</title>
        <authorList>
            <person name="Palenik B."/>
            <person name="Brahamsha B."/>
            <person name="Larimer F.W."/>
            <person name="Land M.L."/>
            <person name="Hauser L."/>
            <person name="Chain P."/>
            <person name="Lamerdin J.E."/>
            <person name="Regala W."/>
            <person name="Allen E.E."/>
            <person name="McCarren J."/>
            <person name="Paulsen I.T."/>
            <person name="Dufresne A."/>
            <person name="Partensky F."/>
            <person name="Webb E.A."/>
            <person name="Waterbury J."/>
        </authorList>
    </citation>
    <scope>NUCLEOTIDE SEQUENCE [LARGE SCALE GENOMIC DNA]</scope>
    <source>
        <strain>WH8102</strain>
    </source>
</reference>
<feature type="chain" id="PRO_0000357425" description="Enolase-phosphatase E1">
    <location>
        <begin position="1"/>
        <end position="245"/>
    </location>
</feature>
<comment type="function">
    <text evidence="1">Bifunctional enzyme that catalyzes the enolization of 2,3-diketo-5-methylthiopentyl-1-phosphate (DK-MTP-1-P) into the intermediate 2-hydroxy-3-keto-5-methylthiopentenyl-1-phosphate (HK-MTPenyl-1-P), which is then dephosphorylated to form the acireductone 1,2-dihydroxy-3-keto-5-methylthiopentene (DHK-MTPene).</text>
</comment>
<comment type="catalytic activity">
    <reaction evidence="1">
        <text>5-methylsulfanyl-2,3-dioxopentyl phosphate + H2O = 1,2-dihydroxy-5-(methylsulfanyl)pent-1-en-3-one + phosphate</text>
        <dbReference type="Rhea" id="RHEA:21700"/>
        <dbReference type="ChEBI" id="CHEBI:15377"/>
        <dbReference type="ChEBI" id="CHEBI:43474"/>
        <dbReference type="ChEBI" id="CHEBI:49252"/>
        <dbReference type="ChEBI" id="CHEBI:58828"/>
        <dbReference type="EC" id="3.1.3.77"/>
    </reaction>
</comment>
<comment type="cofactor">
    <cofactor evidence="1">
        <name>Mg(2+)</name>
        <dbReference type="ChEBI" id="CHEBI:18420"/>
    </cofactor>
    <text evidence="1">Binds 1 Mg(2+) ion per subunit.</text>
</comment>
<comment type="pathway">
    <text evidence="1">Amino-acid biosynthesis; L-methionine biosynthesis via salvage pathway; L-methionine from S-methyl-5-thio-alpha-D-ribose 1-phosphate: step 3/6.</text>
</comment>
<comment type="pathway">
    <text evidence="1">Amino-acid biosynthesis; L-methionine biosynthesis via salvage pathway; L-methionine from S-methyl-5-thio-alpha-D-ribose 1-phosphate: step 4/6.</text>
</comment>
<comment type="subunit">
    <text evidence="1">Monomer.</text>
</comment>
<comment type="similarity">
    <text evidence="1">Belongs to the HAD-like hydrolase superfamily. MasA/MtnC family.</text>
</comment>